<sequence>MTLSQLKNCQIITALVTPFHADGSINFKALPELIEHLLNNHTQALLLAGTTAESPTLTHEEELELFSEVQRIVNGRVPLIAGIGTNDTRDSVDFAKEVANFGGFAAGLAIVPYYNKPTQEGLYQHFLAIAEASSLPIIIYNIPGRVVVDLHPDTLLKLAQHPNIIGVKDCTNLDHLAYIIENKPEDFLIYTGEDGQIFHAMNLGADGVISVASHTNGSEIFEMINHITNGRIKEAAQIQRRFLPKVNALFSVSSPAPVKAVLNYLGFNVGPLRLPLVACTRQEADAIINIVLDKAPKEYVTKGVLRPDY</sequence>
<dbReference type="EC" id="4.3.3.7" evidence="1"/>
<dbReference type="EMBL" id="AM946015">
    <property type="protein sequence ID" value="CAR42088.1"/>
    <property type="molecule type" value="Genomic_DNA"/>
</dbReference>
<dbReference type="RefSeq" id="WP_012658437.1">
    <property type="nucleotide sequence ID" value="NC_012004.1"/>
</dbReference>
<dbReference type="SMR" id="B9DS79"/>
<dbReference type="STRING" id="218495.SUB0938"/>
<dbReference type="GeneID" id="93826213"/>
<dbReference type="KEGG" id="sub:SUB0938"/>
<dbReference type="eggNOG" id="COG0329">
    <property type="taxonomic scope" value="Bacteria"/>
</dbReference>
<dbReference type="HOGENOM" id="CLU_049343_7_1_9"/>
<dbReference type="OrthoDB" id="9782828at2"/>
<dbReference type="UniPathway" id="UPA00034">
    <property type="reaction ID" value="UER00017"/>
</dbReference>
<dbReference type="Proteomes" id="UP000000449">
    <property type="component" value="Chromosome"/>
</dbReference>
<dbReference type="GO" id="GO:0005829">
    <property type="term" value="C:cytosol"/>
    <property type="evidence" value="ECO:0007669"/>
    <property type="project" value="TreeGrafter"/>
</dbReference>
<dbReference type="GO" id="GO:0008840">
    <property type="term" value="F:4-hydroxy-tetrahydrodipicolinate synthase activity"/>
    <property type="evidence" value="ECO:0007669"/>
    <property type="project" value="UniProtKB-UniRule"/>
</dbReference>
<dbReference type="GO" id="GO:0019877">
    <property type="term" value="P:diaminopimelate biosynthetic process"/>
    <property type="evidence" value="ECO:0007669"/>
    <property type="project" value="UniProtKB-UniRule"/>
</dbReference>
<dbReference type="GO" id="GO:0009089">
    <property type="term" value="P:lysine biosynthetic process via diaminopimelate"/>
    <property type="evidence" value="ECO:0007669"/>
    <property type="project" value="UniProtKB-UniRule"/>
</dbReference>
<dbReference type="CDD" id="cd00950">
    <property type="entry name" value="DHDPS"/>
    <property type="match status" value="1"/>
</dbReference>
<dbReference type="Gene3D" id="3.20.20.70">
    <property type="entry name" value="Aldolase class I"/>
    <property type="match status" value="1"/>
</dbReference>
<dbReference type="HAMAP" id="MF_00418">
    <property type="entry name" value="DapA"/>
    <property type="match status" value="1"/>
</dbReference>
<dbReference type="InterPro" id="IPR013785">
    <property type="entry name" value="Aldolase_TIM"/>
</dbReference>
<dbReference type="InterPro" id="IPR005263">
    <property type="entry name" value="DapA"/>
</dbReference>
<dbReference type="InterPro" id="IPR002220">
    <property type="entry name" value="DapA-like"/>
</dbReference>
<dbReference type="InterPro" id="IPR020625">
    <property type="entry name" value="Schiff_base-form_aldolases_AS"/>
</dbReference>
<dbReference type="NCBIfam" id="TIGR00674">
    <property type="entry name" value="dapA"/>
    <property type="match status" value="1"/>
</dbReference>
<dbReference type="PANTHER" id="PTHR12128:SF66">
    <property type="entry name" value="4-HYDROXY-2-OXOGLUTARATE ALDOLASE, MITOCHONDRIAL"/>
    <property type="match status" value="1"/>
</dbReference>
<dbReference type="PANTHER" id="PTHR12128">
    <property type="entry name" value="DIHYDRODIPICOLINATE SYNTHASE"/>
    <property type="match status" value="1"/>
</dbReference>
<dbReference type="Pfam" id="PF00701">
    <property type="entry name" value="DHDPS"/>
    <property type="match status" value="1"/>
</dbReference>
<dbReference type="PIRSF" id="PIRSF001365">
    <property type="entry name" value="DHDPS"/>
    <property type="match status" value="1"/>
</dbReference>
<dbReference type="PRINTS" id="PR00146">
    <property type="entry name" value="DHPICSNTHASE"/>
</dbReference>
<dbReference type="SMART" id="SM01130">
    <property type="entry name" value="DHDPS"/>
    <property type="match status" value="1"/>
</dbReference>
<dbReference type="SUPFAM" id="SSF51569">
    <property type="entry name" value="Aldolase"/>
    <property type="match status" value="1"/>
</dbReference>
<dbReference type="PROSITE" id="PS00666">
    <property type="entry name" value="DHDPS_2"/>
    <property type="match status" value="1"/>
</dbReference>
<keyword id="KW-0028">Amino-acid biosynthesis</keyword>
<keyword id="KW-0963">Cytoplasm</keyword>
<keyword id="KW-0220">Diaminopimelate biosynthesis</keyword>
<keyword id="KW-0456">Lyase</keyword>
<keyword id="KW-0457">Lysine biosynthesis</keyword>
<keyword id="KW-1185">Reference proteome</keyword>
<keyword id="KW-0704">Schiff base</keyword>
<evidence type="ECO:0000255" key="1">
    <source>
        <dbReference type="HAMAP-Rule" id="MF_00418"/>
    </source>
</evidence>
<evidence type="ECO:0000305" key="2"/>
<reference key="1">
    <citation type="journal article" date="2009" name="BMC Genomics">
        <title>Evidence for niche adaptation in the genome of the bovine pathogen Streptococcus uberis.</title>
        <authorList>
            <person name="Ward P.N."/>
            <person name="Holden M.T.G."/>
            <person name="Leigh J.A."/>
            <person name="Lennard N."/>
            <person name="Bignell A."/>
            <person name="Barron A."/>
            <person name="Clark L."/>
            <person name="Quail M.A."/>
            <person name="Woodward J."/>
            <person name="Barrell B.G."/>
            <person name="Egan S.A."/>
            <person name="Field T.R."/>
            <person name="Maskell D."/>
            <person name="Kehoe M."/>
            <person name="Dowson C.G."/>
            <person name="Chanter N."/>
            <person name="Whatmore A.M."/>
            <person name="Bentley S.D."/>
            <person name="Parkhill J."/>
        </authorList>
    </citation>
    <scope>NUCLEOTIDE SEQUENCE [LARGE SCALE GENOMIC DNA]</scope>
    <source>
        <strain>ATCC BAA-854 / 0140J</strain>
    </source>
</reference>
<organism>
    <name type="scientific">Streptococcus uberis (strain ATCC BAA-854 / 0140J)</name>
    <dbReference type="NCBI Taxonomy" id="218495"/>
    <lineage>
        <taxon>Bacteria</taxon>
        <taxon>Bacillati</taxon>
        <taxon>Bacillota</taxon>
        <taxon>Bacilli</taxon>
        <taxon>Lactobacillales</taxon>
        <taxon>Streptococcaceae</taxon>
        <taxon>Streptococcus</taxon>
    </lineage>
</organism>
<proteinExistence type="inferred from homology"/>
<feature type="chain" id="PRO_1000134880" description="4-hydroxy-tetrahydrodipicolinate synthase">
    <location>
        <begin position="1"/>
        <end position="309"/>
    </location>
</feature>
<feature type="active site" description="Proton donor/acceptor" evidence="1">
    <location>
        <position position="140"/>
    </location>
</feature>
<feature type="active site" description="Schiff-base intermediate with substrate" evidence="1">
    <location>
        <position position="168"/>
    </location>
</feature>
<feature type="binding site" evidence="1">
    <location>
        <position position="51"/>
    </location>
    <ligand>
        <name>pyruvate</name>
        <dbReference type="ChEBI" id="CHEBI:15361"/>
    </ligand>
</feature>
<feature type="binding site" evidence="1">
    <location>
        <position position="209"/>
    </location>
    <ligand>
        <name>pyruvate</name>
        <dbReference type="ChEBI" id="CHEBI:15361"/>
    </ligand>
</feature>
<feature type="site" description="Part of a proton relay during catalysis" evidence="1">
    <location>
        <position position="50"/>
    </location>
</feature>
<feature type="site" description="Part of a proton relay during catalysis" evidence="1">
    <location>
        <position position="114"/>
    </location>
</feature>
<comment type="function">
    <text evidence="1">Catalyzes the condensation of (S)-aspartate-beta-semialdehyde [(S)-ASA] and pyruvate to 4-hydroxy-tetrahydrodipicolinate (HTPA).</text>
</comment>
<comment type="catalytic activity">
    <reaction evidence="1">
        <text>L-aspartate 4-semialdehyde + pyruvate = (2S,4S)-4-hydroxy-2,3,4,5-tetrahydrodipicolinate + H2O + H(+)</text>
        <dbReference type="Rhea" id="RHEA:34171"/>
        <dbReference type="ChEBI" id="CHEBI:15361"/>
        <dbReference type="ChEBI" id="CHEBI:15377"/>
        <dbReference type="ChEBI" id="CHEBI:15378"/>
        <dbReference type="ChEBI" id="CHEBI:67139"/>
        <dbReference type="ChEBI" id="CHEBI:537519"/>
        <dbReference type="EC" id="4.3.3.7"/>
    </reaction>
</comment>
<comment type="pathway">
    <text evidence="1">Amino-acid biosynthesis; L-lysine biosynthesis via DAP pathway; (S)-tetrahydrodipicolinate from L-aspartate: step 3/4.</text>
</comment>
<comment type="subunit">
    <text evidence="1">Homotetramer; dimer of dimers.</text>
</comment>
<comment type="subcellular location">
    <subcellularLocation>
        <location evidence="1">Cytoplasm</location>
    </subcellularLocation>
</comment>
<comment type="similarity">
    <text evidence="1">Belongs to the DapA family.</text>
</comment>
<comment type="caution">
    <text evidence="2">Was originally thought to be a dihydrodipicolinate synthase (DHDPS), catalyzing the condensation of (S)-aspartate-beta-semialdehyde [(S)-ASA] and pyruvate to dihydrodipicolinate (DHDP). However, it was shown in E.coli that the product of the enzymatic reaction is not dihydrodipicolinate but in fact (4S)-4-hydroxy-2,3,4,5-tetrahydro-(2S)-dipicolinic acid (HTPA), and that the consecutive dehydration reaction leading to DHDP is not spontaneous but catalyzed by DapB.</text>
</comment>
<gene>
    <name evidence="1" type="primary">dapA</name>
    <name type="ordered locus">SUB0938</name>
</gene>
<accession>B9DS79</accession>
<name>DAPA_STRU0</name>
<protein>
    <recommendedName>
        <fullName evidence="1">4-hydroxy-tetrahydrodipicolinate synthase</fullName>
        <shortName evidence="1">HTPA synthase</shortName>
        <ecNumber evidence="1">4.3.3.7</ecNumber>
    </recommendedName>
</protein>